<name>TNR12_HUMAN</name>
<proteinExistence type="evidence at protein level"/>
<gene>
    <name type="primary">TNFRSF12A</name>
    <name type="synonym">FN14</name>
</gene>
<evidence type="ECO:0000255" key="1"/>
<evidence type="ECO:0000269" key="2">
    <source>
    </source>
</evidence>
<evidence type="ECO:0000269" key="3">
    <source>
    </source>
</evidence>
<evidence type="ECO:0000303" key="4">
    <source ref="2"/>
</evidence>
<evidence type="ECO:0007829" key="5">
    <source>
        <dbReference type="PDB" id="2EQP"/>
    </source>
</evidence>
<dbReference type="EMBL" id="AF191148">
    <property type="protein sequence ID" value="AAF69108.1"/>
    <property type="molecule type" value="mRNA"/>
</dbReference>
<dbReference type="EMBL" id="AB035480">
    <property type="protein sequence ID" value="BAA94792.1"/>
    <property type="molecule type" value="mRNA"/>
</dbReference>
<dbReference type="EMBL" id="AB035481">
    <property type="protein sequence ID" value="BAB17850.1"/>
    <property type="molecule type" value="mRNA"/>
</dbReference>
<dbReference type="EMBL" id="CH471112">
    <property type="protein sequence ID" value="EAW85429.1"/>
    <property type="molecule type" value="Genomic_DNA"/>
</dbReference>
<dbReference type="EMBL" id="CH471112">
    <property type="protein sequence ID" value="EAW85430.1"/>
    <property type="molecule type" value="Genomic_DNA"/>
</dbReference>
<dbReference type="EMBL" id="BC002718">
    <property type="protein sequence ID" value="AAH02718.1"/>
    <property type="molecule type" value="mRNA"/>
</dbReference>
<dbReference type="CCDS" id="CCDS10489.1">
    <molecule id="Q9NP84-1"/>
</dbReference>
<dbReference type="RefSeq" id="NP_057723.1">
    <molecule id="Q9NP84-1"/>
    <property type="nucleotide sequence ID" value="NM_016639.3"/>
</dbReference>
<dbReference type="PDB" id="2EQP">
    <property type="method" value="NMR"/>
    <property type="chains" value="A=28-70"/>
</dbReference>
<dbReference type="PDB" id="2KMZ">
    <property type="method" value="NMR"/>
    <property type="chains" value="A=28-80"/>
</dbReference>
<dbReference type="PDB" id="2RPJ">
    <property type="method" value="NMR"/>
    <property type="chains" value="A=28-70"/>
</dbReference>
<dbReference type="PDBsum" id="2EQP"/>
<dbReference type="PDBsum" id="2KMZ"/>
<dbReference type="PDBsum" id="2RPJ"/>
<dbReference type="BMRB" id="Q9NP84"/>
<dbReference type="SMR" id="Q9NP84"/>
<dbReference type="BioGRID" id="119478">
    <property type="interactions" value="9"/>
</dbReference>
<dbReference type="FunCoup" id="Q9NP84">
    <property type="interactions" value="643"/>
</dbReference>
<dbReference type="IntAct" id="Q9NP84">
    <property type="interactions" value="7"/>
</dbReference>
<dbReference type="MINT" id="Q9NP84"/>
<dbReference type="STRING" id="9606.ENSP00000326737"/>
<dbReference type="ChEMBL" id="CHEMBL3712850"/>
<dbReference type="PhosphoSitePlus" id="Q9NP84"/>
<dbReference type="SwissPalm" id="Q9NP84"/>
<dbReference type="BioMuta" id="TNFRSF12A"/>
<dbReference type="DMDM" id="21263626"/>
<dbReference type="jPOST" id="Q9NP84"/>
<dbReference type="MassIVE" id="Q9NP84"/>
<dbReference type="PaxDb" id="9606-ENSP00000326737"/>
<dbReference type="PeptideAtlas" id="Q9NP84"/>
<dbReference type="ProteomicsDB" id="81927">
    <molecule id="Q9NP84-1"/>
</dbReference>
<dbReference type="ProteomicsDB" id="81928">
    <molecule id="Q9NP84-2"/>
</dbReference>
<dbReference type="Pumba" id="Q9NP84"/>
<dbReference type="ABCD" id="Q9NP84">
    <property type="antibodies" value="7 sequenced antibodies"/>
</dbReference>
<dbReference type="Antibodypedia" id="2115">
    <property type="antibodies" value="567 antibodies from 43 providers"/>
</dbReference>
<dbReference type="DNASU" id="51330"/>
<dbReference type="Ensembl" id="ENST00000326577.9">
    <molecule id="Q9NP84-1"/>
    <property type="protein sequence ID" value="ENSP00000326737.5"/>
    <property type="gene ID" value="ENSG00000006327.14"/>
</dbReference>
<dbReference type="Ensembl" id="ENST00000341627.5">
    <molecule id="Q9NP84-2"/>
    <property type="protein sequence ID" value="ENSP00000343894.5"/>
    <property type="gene ID" value="ENSG00000006327.14"/>
</dbReference>
<dbReference type="GeneID" id="51330"/>
<dbReference type="KEGG" id="hsa:51330"/>
<dbReference type="MANE-Select" id="ENST00000326577.9">
    <property type="protein sequence ID" value="ENSP00000326737.5"/>
    <property type="RefSeq nucleotide sequence ID" value="NM_016639.3"/>
    <property type="RefSeq protein sequence ID" value="NP_057723.1"/>
</dbReference>
<dbReference type="UCSC" id="uc002csv.5">
    <molecule id="Q9NP84-1"/>
    <property type="organism name" value="human"/>
</dbReference>
<dbReference type="AGR" id="HGNC:18152"/>
<dbReference type="CTD" id="51330"/>
<dbReference type="DisGeNET" id="51330"/>
<dbReference type="GeneCards" id="TNFRSF12A"/>
<dbReference type="HGNC" id="HGNC:18152">
    <property type="gene designation" value="TNFRSF12A"/>
</dbReference>
<dbReference type="HPA" id="ENSG00000006327">
    <property type="expression patterns" value="Low tissue specificity"/>
</dbReference>
<dbReference type="MIM" id="605914">
    <property type="type" value="gene"/>
</dbReference>
<dbReference type="neXtProt" id="NX_Q9NP84"/>
<dbReference type="OpenTargets" id="ENSG00000006327"/>
<dbReference type="PharmGKB" id="PA134976874"/>
<dbReference type="VEuPathDB" id="HostDB:ENSG00000006327"/>
<dbReference type="eggNOG" id="ENOG502SFZC">
    <property type="taxonomic scope" value="Eukaryota"/>
</dbReference>
<dbReference type="GeneTree" id="ENSGT00390000001948"/>
<dbReference type="InParanoid" id="Q9NP84"/>
<dbReference type="OMA" id="HSDFCRG"/>
<dbReference type="PAN-GO" id="Q9NP84">
    <property type="GO annotations" value="2 GO annotations based on evolutionary models"/>
</dbReference>
<dbReference type="PhylomeDB" id="Q9NP84"/>
<dbReference type="TreeFam" id="TF337901"/>
<dbReference type="PathwayCommons" id="Q9NP84"/>
<dbReference type="Reactome" id="R-HSA-5668541">
    <property type="pathway name" value="TNFR2 non-canonical NF-kB pathway"/>
</dbReference>
<dbReference type="Reactome" id="R-HSA-5676594">
    <property type="pathway name" value="TNF receptor superfamily (TNFSF) members mediating non-canonical NF-kB pathway"/>
</dbReference>
<dbReference type="SignaLink" id="Q9NP84"/>
<dbReference type="SIGNOR" id="Q9NP84"/>
<dbReference type="BioGRID-ORCS" id="51330">
    <property type="hits" value="28 hits in 1161 CRISPR screens"/>
</dbReference>
<dbReference type="ChiTaRS" id="TNFRSF12A">
    <property type="organism name" value="human"/>
</dbReference>
<dbReference type="EvolutionaryTrace" id="Q9NP84"/>
<dbReference type="GeneWiki" id="TNFRSF12A"/>
<dbReference type="GenomeRNAi" id="51330"/>
<dbReference type="Pharos" id="Q9NP84">
    <property type="development level" value="Tbio"/>
</dbReference>
<dbReference type="PRO" id="PR:Q9NP84"/>
<dbReference type="Proteomes" id="UP000005640">
    <property type="component" value="Chromosome 16"/>
</dbReference>
<dbReference type="RNAct" id="Q9NP84">
    <property type="molecule type" value="protein"/>
</dbReference>
<dbReference type="Bgee" id="ENSG00000006327">
    <property type="expression patterns" value="Expressed in apex of heart and 179 other cell types or tissues"/>
</dbReference>
<dbReference type="ExpressionAtlas" id="Q9NP84">
    <property type="expression patterns" value="baseline and differential"/>
</dbReference>
<dbReference type="GO" id="GO:0009986">
    <property type="term" value="C:cell surface"/>
    <property type="evidence" value="ECO:0007669"/>
    <property type="project" value="Ensembl"/>
</dbReference>
<dbReference type="GO" id="GO:0005886">
    <property type="term" value="C:plasma membrane"/>
    <property type="evidence" value="ECO:0000318"/>
    <property type="project" value="GO_Central"/>
</dbReference>
<dbReference type="GO" id="GO:0001726">
    <property type="term" value="C:ruffle"/>
    <property type="evidence" value="ECO:0007669"/>
    <property type="project" value="Ensembl"/>
</dbReference>
<dbReference type="GO" id="GO:0001525">
    <property type="term" value="P:angiogenesis"/>
    <property type="evidence" value="ECO:0007669"/>
    <property type="project" value="UniProtKB-KW"/>
</dbReference>
<dbReference type="GO" id="GO:0030154">
    <property type="term" value="P:cell differentiation"/>
    <property type="evidence" value="ECO:0007669"/>
    <property type="project" value="UniProtKB-KW"/>
</dbReference>
<dbReference type="GO" id="GO:0097191">
    <property type="term" value="P:extrinsic apoptotic signaling pathway"/>
    <property type="evidence" value="ECO:0007669"/>
    <property type="project" value="Ensembl"/>
</dbReference>
<dbReference type="GO" id="GO:0043065">
    <property type="term" value="P:positive regulation of apoptotic process"/>
    <property type="evidence" value="ECO:0000314"/>
    <property type="project" value="UniProtKB"/>
</dbReference>
<dbReference type="GO" id="GO:0045773">
    <property type="term" value="P:positive regulation of axon extension"/>
    <property type="evidence" value="ECO:0007669"/>
    <property type="project" value="Ensembl"/>
</dbReference>
<dbReference type="GO" id="GO:2001238">
    <property type="term" value="P:positive regulation of extrinsic apoptotic signaling pathway"/>
    <property type="evidence" value="ECO:0000315"/>
    <property type="project" value="UniProtKB"/>
</dbReference>
<dbReference type="GO" id="GO:0045765">
    <property type="term" value="P:regulation of angiogenesis"/>
    <property type="evidence" value="ECO:0007669"/>
    <property type="project" value="Ensembl"/>
</dbReference>
<dbReference type="GO" id="GO:0061041">
    <property type="term" value="P:regulation of wound healing"/>
    <property type="evidence" value="ECO:0000314"/>
    <property type="project" value="UniProtKB"/>
</dbReference>
<dbReference type="GO" id="GO:0006931">
    <property type="term" value="P:substrate-dependent cell migration, cell attachment to substrate"/>
    <property type="evidence" value="ECO:0007669"/>
    <property type="project" value="Ensembl"/>
</dbReference>
<dbReference type="CDD" id="cd13413">
    <property type="entry name" value="TNFRSF12A"/>
    <property type="match status" value="1"/>
</dbReference>
<dbReference type="FunFam" id="4.10.400.20:FF:000001">
    <property type="entry name" value="tumor necrosis factor receptor superfamily member 12A"/>
    <property type="match status" value="1"/>
</dbReference>
<dbReference type="Gene3D" id="4.10.400.20">
    <property type="match status" value="1"/>
</dbReference>
<dbReference type="InterPro" id="IPR022316">
    <property type="entry name" value="TNFR_12"/>
</dbReference>
<dbReference type="PANTHER" id="PTHR32037">
    <property type="entry name" value="TUMOR NECROSIS FACTOR RECEPTOR SUPERFAMILY MEMBER 12A"/>
    <property type="match status" value="1"/>
</dbReference>
<dbReference type="PANTHER" id="PTHR32037:SF2">
    <property type="entry name" value="TUMOR NECROSIS FACTOR RECEPTOR SUPERFAMILY MEMBER 12A"/>
    <property type="match status" value="1"/>
</dbReference>
<dbReference type="Pfam" id="PF12191">
    <property type="entry name" value="stn_TNFRSF12A"/>
    <property type="match status" value="1"/>
</dbReference>
<dbReference type="PRINTS" id="PR01962">
    <property type="entry name" value="TNFACTORR12"/>
</dbReference>
<sequence>MARGSLRRLLRLLVLGLWLALLRSVAGEQAPGTAPCSRGSSWSADLDKCMDCASCRARPHSDFCLGCAAAPPAPFRLLWPILGGALSLTFVLGLLSGFLVWRRCRRREKFTTPIEETGGEGCPAVALIQ</sequence>
<accession>Q9NP84</accession>
<accession>D3DUA6</accession>
<accession>Q9HCS0</accession>
<organism>
    <name type="scientific">Homo sapiens</name>
    <name type="common">Human</name>
    <dbReference type="NCBI Taxonomy" id="9606"/>
    <lineage>
        <taxon>Eukaryota</taxon>
        <taxon>Metazoa</taxon>
        <taxon>Chordata</taxon>
        <taxon>Craniata</taxon>
        <taxon>Vertebrata</taxon>
        <taxon>Euteleostomi</taxon>
        <taxon>Mammalia</taxon>
        <taxon>Eutheria</taxon>
        <taxon>Euarchontoglires</taxon>
        <taxon>Primates</taxon>
        <taxon>Haplorrhini</taxon>
        <taxon>Catarrhini</taxon>
        <taxon>Hominidae</taxon>
        <taxon>Homo</taxon>
    </lineage>
</organism>
<reference key="1">
    <citation type="journal article" date="2000" name="Am. J. Pathol.">
        <title>The Fn14 immediate-early response gene is induced during liver regeneration and highly expressed in both human and murine hepatocellular carcinomas.</title>
        <authorList>
            <person name="Feng S.-L.Y."/>
            <person name="Guo Y."/>
            <person name="Factor V.M."/>
            <person name="Thorgeirsson S.S."/>
            <person name="Bell D.W."/>
            <person name="Testa J.R."/>
            <person name="Peifley K.A."/>
            <person name="Winkles J.A."/>
        </authorList>
    </citation>
    <scope>NUCLEOTIDE SEQUENCE [MRNA] (ISOFORM 1)</scope>
    <source>
        <tissue>Placenta</tissue>
    </source>
</reference>
<reference key="2">
    <citation type="submission" date="1999-12" db="EMBL/GenBank/DDBJ databases">
        <title>Human homologue of Fn14.</title>
        <authorList>
            <person name="Tanaka S."/>
            <person name="Sugimachi K."/>
        </authorList>
    </citation>
    <scope>NUCLEOTIDE SEQUENCE [MRNA] (ISOFORMS 1 AND 2)</scope>
</reference>
<reference key="3">
    <citation type="submission" date="2005-09" db="EMBL/GenBank/DDBJ databases">
        <authorList>
            <person name="Mural R.J."/>
            <person name="Istrail S."/>
            <person name="Sutton G.G."/>
            <person name="Florea L."/>
            <person name="Halpern A.L."/>
            <person name="Mobarry C.M."/>
            <person name="Lippert R."/>
            <person name="Walenz B."/>
            <person name="Shatkay H."/>
            <person name="Dew I."/>
            <person name="Miller J.R."/>
            <person name="Flanigan M.J."/>
            <person name="Edwards N.J."/>
            <person name="Bolanos R."/>
            <person name="Fasulo D."/>
            <person name="Halldorsson B.V."/>
            <person name="Hannenhalli S."/>
            <person name="Turner R."/>
            <person name="Yooseph S."/>
            <person name="Lu F."/>
            <person name="Nusskern D.R."/>
            <person name="Shue B.C."/>
            <person name="Zheng X.H."/>
            <person name="Zhong F."/>
            <person name="Delcher A.L."/>
            <person name="Huson D.H."/>
            <person name="Kravitz S.A."/>
            <person name="Mouchard L."/>
            <person name="Reinert K."/>
            <person name="Remington K.A."/>
            <person name="Clark A.G."/>
            <person name="Waterman M.S."/>
            <person name="Eichler E.E."/>
            <person name="Adams M.D."/>
            <person name="Hunkapiller M.W."/>
            <person name="Myers E.W."/>
            <person name="Venter J.C."/>
        </authorList>
    </citation>
    <scope>NUCLEOTIDE SEQUENCE [LARGE SCALE GENOMIC DNA]</scope>
</reference>
<reference key="4">
    <citation type="journal article" date="2004" name="Genome Res.">
        <title>The status, quality, and expansion of the NIH full-length cDNA project: the Mammalian Gene Collection (MGC).</title>
        <authorList>
            <consortium name="The MGC Project Team"/>
        </authorList>
    </citation>
    <scope>NUCLEOTIDE SEQUENCE [LARGE SCALE MRNA] (ISOFORM 1)</scope>
    <source>
        <tissue>Uterus</tissue>
    </source>
</reference>
<reference key="5">
    <citation type="journal article" date="2001" name="Immunity">
        <title>A novel TNF receptor family member binds TWEAK and is implicated in angiogenesis.</title>
        <authorList>
            <person name="Wiley S.R."/>
            <person name="Cassiano L."/>
            <person name="Lofton T."/>
            <person name="Davis-Smith T."/>
            <person name="Winkles J.A."/>
            <person name="Lindner V."/>
            <person name="Liu H."/>
            <person name="Daniel T.O."/>
            <person name="Smith C.A."/>
            <person name="Fanslow W.C."/>
        </authorList>
    </citation>
    <scope>FUNCTION</scope>
</reference>
<reference key="6">
    <citation type="submission" date="2008-04" db="PDB data bank">
        <title>Solution structure of the STN_TNFRSF12A_TNFR domain of tumor necrosis factor receptor superfamily member 12A precursor.</title>
        <authorList>
            <consortium name="RIKEN structural genomics initiative (RSGI)"/>
        </authorList>
    </citation>
    <scope>STRUCTURE BY NMR OF 26-70</scope>
</reference>
<reference key="7">
    <citation type="journal article" date="2009" name="Protein Sci.">
        <title>Solution structure of the cysteine-rich domain in Fn14, a member of the tumor necrosis factor receptor superfamily.</title>
        <authorList>
            <person name="He F."/>
            <person name="Dang W."/>
            <person name="Saito K."/>
            <person name="Watanabe S."/>
            <person name="Kobayashi N."/>
            <person name="Guntert P."/>
            <person name="Kigawa T."/>
            <person name="Tanaka A."/>
            <person name="Muto Y."/>
            <person name="Yokoyama S."/>
        </authorList>
    </citation>
    <scope>STRUCTURE BY NMR OF 26-70</scope>
    <scope>DISULFIDE BONDS</scope>
</reference>
<comment type="function">
    <text evidence="2">Receptor for TNFSF12/TWEAK. Weak inducer of apoptosis in some cell types. Promotes angiogenesis and the proliferation of endothelial cells. May modulate cellular adhesion to matrix proteins.</text>
</comment>
<comment type="subunit">
    <text>Associates with TRAF1 and TRAF2, and probably also with TRAF3.</text>
</comment>
<comment type="interaction">
    <interactant intactId="EBI-2851995">
        <id>Q9NP84</id>
    </interactant>
    <interactant intactId="EBI-514538">
        <id>Q13490</id>
        <label>BIRC2</label>
    </interactant>
    <organismsDiffer>false</organismsDiffer>
    <experiments>2</experiments>
</comment>
<comment type="interaction">
    <interactant intactId="EBI-2851995">
        <id>Q9NP84</id>
    </interactant>
    <interactant intactId="EBI-3957694">
        <id>Q9BYR6</id>
        <label>KRTAP3-3</label>
    </interactant>
    <organismsDiffer>false</organismsDiffer>
    <experiments>3</experiments>
</comment>
<comment type="interaction">
    <interactant intactId="EBI-2851995">
        <id>Q9NP84</id>
    </interactant>
    <interactant intactId="EBI-8644112">
        <id>Q9BRI3</id>
        <label>SLC30A2</label>
    </interactant>
    <organismsDiffer>false</organismsDiffer>
    <experiments>9</experiments>
</comment>
<comment type="interaction">
    <interactant intactId="EBI-2851995">
        <id>Q9NP84</id>
    </interactant>
    <interactant intactId="EBI-6932080">
        <id>O43508</id>
        <label>TNFSF12</label>
    </interactant>
    <organismsDiffer>false</organismsDiffer>
    <experiments>2</experiments>
</comment>
<comment type="interaction">
    <interactant intactId="EBI-2851995">
        <id>Q9NP84</id>
    </interactant>
    <interactant intactId="EBI-355744">
        <id>Q12933</id>
        <label>TRAF2</label>
    </interactant>
    <organismsDiffer>false</organismsDiffer>
    <experiments>3</experiments>
</comment>
<comment type="subcellular location">
    <subcellularLocation>
        <location>Membrane</location>
        <topology>Single-pass type I membrane protein</topology>
    </subcellularLocation>
</comment>
<comment type="alternative products">
    <event type="alternative splicing"/>
    <isoform>
        <id>Q9NP84-1</id>
        <name>1</name>
        <sequence type="displayed"/>
    </isoform>
    <isoform>
        <id>Q9NP84-2</id>
        <name>2</name>
        <sequence type="described" ref="VSP_006519"/>
    </isoform>
</comment>
<comment type="tissue specificity">
    <text>Highly expressed in heart, placenta and kidney. Intermediate expression in lung, skeletal muscle and pancreas.</text>
</comment>
<comment type="induction">
    <text>By FGF1 and phorbol ester.</text>
</comment>
<feature type="signal peptide" evidence="1">
    <location>
        <begin position="1"/>
        <end position="27"/>
    </location>
</feature>
<feature type="chain" id="PRO_0000034611" description="Tumor necrosis factor receptor superfamily member 12A">
    <location>
        <begin position="28"/>
        <end position="129"/>
    </location>
</feature>
<feature type="topological domain" description="Extracellular" evidence="1">
    <location>
        <begin position="28"/>
        <end position="80"/>
    </location>
</feature>
<feature type="transmembrane region" description="Helical" evidence="1">
    <location>
        <begin position="81"/>
        <end position="101"/>
    </location>
</feature>
<feature type="topological domain" description="Cytoplasmic" evidence="1">
    <location>
        <begin position="102"/>
        <end position="129"/>
    </location>
</feature>
<feature type="repeat" description="TNFR-Cys; atypical">
    <location>
        <begin position="36"/>
        <end position="67"/>
    </location>
</feature>
<feature type="disulfide bond" evidence="3">
    <location>
        <begin position="36"/>
        <end position="49"/>
    </location>
</feature>
<feature type="disulfide bond" evidence="3">
    <location>
        <begin position="52"/>
        <end position="67"/>
    </location>
</feature>
<feature type="disulfide bond" evidence="3">
    <location>
        <begin position="55"/>
        <end position="64"/>
    </location>
</feature>
<feature type="splice variant" id="VSP_006519" description="In isoform 2." evidence="4">
    <location>
        <begin position="33"/>
        <end position="67"/>
    </location>
</feature>
<feature type="helix" evidence="5">
    <location>
        <begin position="30"/>
        <end position="33"/>
    </location>
</feature>
<feature type="strand" evidence="5">
    <location>
        <begin position="41"/>
        <end position="43"/>
    </location>
</feature>
<feature type="turn" evidence="5">
    <location>
        <begin position="44"/>
        <end position="47"/>
    </location>
</feature>
<feature type="strand" evidence="5">
    <location>
        <begin position="48"/>
        <end position="50"/>
    </location>
</feature>
<feature type="helix" evidence="5">
    <location>
        <begin position="52"/>
        <end position="57"/>
    </location>
</feature>
<feature type="helix" evidence="5">
    <location>
        <begin position="62"/>
        <end position="65"/>
    </location>
</feature>
<keyword id="KW-0002">3D-structure</keyword>
<keyword id="KW-0025">Alternative splicing</keyword>
<keyword id="KW-0037">Angiogenesis</keyword>
<keyword id="KW-0053">Apoptosis</keyword>
<keyword id="KW-0130">Cell adhesion</keyword>
<keyword id="KW-0217">Developmental protein</keyword>
<keyword id="KW-0221">Differentiation</keyword>
<keyword id="KW-1015">Disulfide bond</keyword>
<keyword id="KW-0472">Membrane</keyword>
<keyword id="KW-1267">Proteomics identification</keyword>
<keyword id="KW-0675">Receptor</keyword>
<keyword id="KW-1185">Reference proteome</keyword>
<keyword id="KW-0732">Signal</keyword>
<keyword id="KW-0812">Transmembrane</keyword>
<keyword id="KW-1133">Transmembrane helix</keyword>
<protein>
    <recommendedName>
        <fullName>Tumor necrosis factor receptor superfamily member 12A</fullName>
    </recommendedName>
    <alternativeName>
        <fullName>Fibroblast growth factor-inducible immediate-early response protein 14</fullName>
        <shortName>FGF-inducible 14</shortName>
    </alternativeName>
    <alternativeName>
        <fullName>Tweak-receptor</fullName>
        <shortName>TweakR</shortName>
    </alternativeName>
    <cdAntigenName>CD266</cdAntigenName>
</protein>